<evidence type="ECO:0000255" key="1">
    <source>
        <dbReference type="HAMAP-Rule" id="MF_00012"/>
    </source>
</evidence>
<proteinExistence type="inferred from homology"/>
<dbReference type="EC" id="4.2.1.9" evidence="1"/>
<dbReference type="EMBL" id="CP000300">
    <property type="protein sequence ID" value="ABE53109.1"/>
    <property type="molecule type" value="Genomic_DNA"/>
</dbReference>
<dbReference type="RefSeq" id="WP_011500245.1">
    <property type="nucleotide sequence ID" value="NC_007955.1"/>
</dbReference>
<dbReference type="SMR" id="Q12TW7"/>
<dbReference type="STRING" id="259564.Mbur_2246"/>
<dbReference type="GeneID" id="3998858"/>
<dbReference type="KEGG" id="mbu:Mbur_2246"/>
<dbReference type="HOGENOM" id="CLU_014271_4_2_2"/>
<dbReference type="OrthoDB" id="8674at2157"/>
<dbReference type="UniPathway" id="UPA00047">
    <property type="reaction ID" value="UER00057"/>
</dbReference>
<dbReference type="UniPathway" id="UPA00049">
    <property type="reaction ID" value="UER00061"/>
</dbReference>
<dbReference type="Proteomes" id="UP000001979">
    <property type="component" value="Chromosome"/>
</dbReference>
<dbReference type="GO" id="GO:0005829">
    <property type="term" value="C:cytosol"/>
    <property type="evidence" value="ECO:0007669"/>
    <property type="project" value="TreeGrafter"/>
</dbReference>
<dbReference type="GO" id="GO:0051537">
    <property type="term" value="F:2 iron, 2 sulfur cluster binding"/>
    <property type="evidence" value="ECO:0007669"/>
    <property type="project" value="UniProtKB-UniRule"/>
</dbReference>
<dbReference type="GO" id="GO:0004160">
    <property type="term" value="F:dihydroxy-acid dehydratase activity"/>
    <property type="evidence" value="ECO:0007669"/>
    <property type="project" value="UniProtKB-UniRule"/>
</dbReference>
<dbReference type="GO" id="GO:0000287">
    <property type="term" value="F:magnesium ion binding"/>
    <property type="evidence" value="ECO:0007669"/>
    <property type="project" value="UniProtKB-UniRule"/>
</dbReference>
<dbReference type="GO" id="GO:0009097">
    <property type="term" value="P:isoleucine biosynthetic process"/>
    <property type="evidence" value="ECO:0007669"/>
    <property type="project" value="UniProtKB-UniRule"/>
</dbReference>
<dbReference type="GO" id="GO:0009099">
    <property type="term" value="P:L-valine biosynthetic process"/>
    <property type="evidence" value="ECO:0007669"/>
    <property type="project" value="UniProtKB-UniRule"/>
</dbReference>
<dbReference type="FunFam" id="3.50.30.80:FF:000001">
    <property type="entry name" value="Dihydroxy-acid dehydratase"/>
    <property type="match status" value="1"/>
</dbReference>
<dbReference type="Gene3D" id="3.50.30.80">
    <property type="entry name" value="IlvD/EDD C-terminal domain-like"/>
    <property type="match status" value="1"/>
</dbReference>
<dbReference type="HAMAP" id="MF_00012">
    <property type="entry name" value="IlvD"/>
    <property type="match status" value="1"/>
</dbReference>
<dbReference type="InterPro" id="IPR042096">
    <property type="entry name" value="Dihydro-acid_dehy_C"/>
</dbReference>
<dbReference type="InterPro" id="IPR004404">
    <property type="entry name" value="DihydroxyA_deHydtase"/>
</dbReference>
<dbReference type="InterPro" id="IPR020558">
    <property type="entry name" value="DiOHA_6PGluconate_deHydtase_CS"/>
</dbReference>
<dbReference type="InterPro" id="IPR056740">
    <property type="entry name" value="ILV_EDD_C"/>
</dbReference>
<dbReference type="InterPro" id="IPR000581">
    <property type="entry name" value="ILV_EDD_N"/>
</dbReference>
<dbReference type="InterPro" id="IPR037237">
    <property type="entry name" value="IlvD/EDD_N"/>
</dbReference>
<dbReference type="NCBIfam" id="TIGR00110">
    <property type="entry name" value="ilvD"/>
    <property type="match status" value="1"/>
</dbReference>
<dbReference type="NCBIfam" id="NF002068">
    <property type="entry name" value="PRK00911.1"/>
    <property type="match status" value="1"/>
</dbReference>
<dbReference type="PANTHER" id="PTHR43661">
    <property type="entry name" value="D-XYLONATE DEHYDRATASE"/>
    <property type="match status" value="1"/>
</dbReference>
<dbReference type="PANTHER" id="PTHR43661:SF3">
    <property type="entry name" value="D-XYLONATE DEHYDRATASE YAGF-RELATED"/>
    <property type="match status" value="1"/>
</dbReference>
<dbReference type="Pfam" id="PF24877">
    <property type="entry name" value="ILV_EDD_C"/>
    <property type="match status" value="1"/>
</dbReference>
<dbReference type="Pfam" id="PF00920">
    <property type="entry name" value="ILVD_EDD_N"/>
    <property type="match status" value="1"/>
</dbReference>
<dbReference type="SUPFAM" id="SSF143975">
    <property type="entry name" value="IlvD/EDD N-terminal domain-like"/>
    <property type="match status" value="1"/>
</dbReference>
<dbReference type="SUPFAM" id="SSF52016">
    <property type="entry name" value="LeuD/IlvD-like"/>
    <property type="match status" value="1"/>
</dbReference>
<dbReference type="PROSITE" id="PS00886">
    <property type="entry name" value="ILVD_EDD_1"/>
    <property type="match status" value="1"/>
</dbReference>
<dbReference type="PROSITE" id="PS00887">
    <property type="entry name" value="ILVD_EDD_2"/>
    <property type="match status" value="1"/>
</dbReference>
<keyword id="KW-0001">2Fe-2S</keyword>
<keyword id="KW-0028">Amino-acid biosynthesis</keyword>
<keyword id="KW-0100">Branched-chain amino acid biosynthesis</keyword>
<keyword id="KW-0408">Iron</keyword>
<keyword id="KW-0411">Iron-sulfur</keyword>
<keyword id="KW-0456">Lyase</keyword>
<keyword id="KW-0460">Magnesium</keyword>
<keyword id="KW-0479">Metal-binding</keyword>
<comment type="function">
    <text evidence="1">Functions in the biosynthesis of branched-chain amino acids. Catalyzes the dehydration of (2R,3R)-2,3-dihydroxy-3-methylpentanoate (2,3-dihydroxy-3-methylvalerate) into 2-oxo-3-methylpentanoate (2-oxo-3-methylvalerate) and of (2R)-2,3-dihydroxy-3-methylbutanoate (2,3-dihydroxyisovalerate) into 2-oxo-3-methylbutanoate (2-oxoisovalerate), the penultimate precursor to L-isoleucine and L-valine, respectively.</text>
</comment>
<comment type="catalytic activity">
    <reaction evidence="1">
        <text>(2R)-2,3-dihydroxy-3-methylbutanoate = 3-methyl-2-oxobutanoate + H2O</text>
        <dbReference type="Rhea" id="RHEA:24809"/>
        <dbReference type="ChEBI" id="CHEBI:11851"/>
        <dbReference type="ChEBI" id="CHEBI:15377"/>
        <dbReference type="ChEBI" id="CHEBI:49072"/>
        <dbReference type="EC" id="4.2.1.9"/>
    </reaction>
    <physiologicalReaction direction="left-to-right" evidence="1">
        <dbReference type="Rhea" id="RHEA:24810"/>
    </physiologicalReaction>
</comment>
<comment type="catalytic activity">
    <reaction evidence="1">
        <text>(2R,3R)-2,3-dihydroxy-3-methylpentanoate = (S)-3-methyl-2-oxopentanoate + H2O</text>
        <dbReference type="Rhea" id="RHEA:27694"/>
        <dbReference type="ChEBI" id="CHEBI:15377"/>
        <dbReference type="ChEBI" id="CHEBI:35146"/>
        <dbReference type="ChEBI" id="CHEBI:49258"/>
        <dbReference type="EC" id="4.2.1.9"/>
    </reaction>
    <physiologicalReaction direction="left-to-right" evidence="1">
        <dbReference type="Rhea" id="RHEA:27695"/>
    </physiologicalReaction>
</comment>
<comment type="cofactor">
    <cofactor evidence="1">
        <name>[2Fe-2S] cluster</name>
        <dbReference type="ChEBI" id="CHEBI:190135"/>
    </cofactor>
    <text evidence="1">Binds 1 [2Fe-2S] cluster per subunit. This cluster acts as a Lewis acid cofactor.</text>
</comment>
<comment type="cofactor">
    <cofactor evidence="1">
        <name>Mg(2+)</name>
        <dbReference type="ChEBI" id="CHEBI:18420"/>
    </cofactor>
</comment>
<comment type="pathway">
    <text evidence="1">Amino-acid biosynthesis; L-isoleucine biosynthesis; L-isoleucine from 2-oxobutanoate: step 3/4.</text>
</comment>
<comment type="pathway">
    <text evidence="1">Amino-acid biosynthesis; L-valine biosynthesis; L-valine from pyruvate: step 3/4.</text>
</comment>
<comment type="subunit">
    <text evidence="1">Homodimer.</text>
</comment>
<comment type="similarity">
    <text evidence="1">Belongs to the IlvD/Edd family.</text>
</comment>
<feature type="chain" id="PRO_1000001004" description="Dihydroxy-acid dehydratase">
    <location>
        <begin position="1"/>
        <end position="553"/>
    </location>
</feature>
<feature type="active site" description="Proton acceptor" evidence="1">
    <location>
        <position position="470"/>
    </location>
</feature>
<feature type="binding site" evidence="1">
    <location>
        <position position="78"/>
    </location>
    <ligand>
        <name>Mg(2+)</name>
        <dbReference type="ChEBI" id="CHEBI:18420"/>
    </ligand>
</feature>
<feature type="binding site" evidence="1">
    <location>
        <position position="119"/>
    </location>
    <ligand>
        <name>[2Fe-2S] cluster</name>
        <dbReference type="ChEBI" id="CHEBI:190135"/>
    </ligand>
</feature>
<feature type="binding site" evidence="1">
    <location>
        <position position="120"/>
    </location>
    <ligand>
        <name>Mg(2+)</name>
        <dbReference type="ChEBI" id="CHEBI:18420"/>
    </ligand>
</feature>
<feature type="binding site" description="via carbamate group" evidence="1">
    <location>
        <position position="121"/>
    </location>
    <ligand>
        <name>Mg(2+)</name>
        <dbReference type="ChEBI" id="CHEBI:18420"/>
    </ligand>
</feature>
<feature type="binding site" evidence="1">
    <location>
        <position position="191"/>
    </location>
    <ligand>
        <name>[2Fe-2S] cluster</name>
        <dbReference type="ChEBI" id="CHEBI:190135"/>
    </ligand>
</feature>
<feature type="binding site" evidence="1">
    <location>
        <position position="444"/>
    </location>
    <ligand>
        <name>Mg(2+)</name>
        <dbReference type="ChEBI" id="CHEBI:18420"/>
    </ligand>
</feature>
<feature type="modified residue" description="N6-carboxylysine" evidence="1">
    <location>
        <position position="121"/>
    </location>
</feature>
<reference key="1">
    <citation type="journal article" date="2009" name="ISME J.">
        <title>The genome sequence of the psychrophilic archaeon, Methanococcoides burtonii: the role of genome evolution in cold adaptation.</title>
        <authorList>
            <person name="Allen M.A."/>
            <person name="Lauro F.M."/>
            <person name="Williams T.J."/>
            <person name="Burg D."/>
            <person name="Siddiqui K.S."/>
            <person name="De Francisci D."/>
            <person name="Chong K.W."/>
            <person name="Pilak O."/>
            <person name="Chew H.H."/>
            <person name="De Maere M.Z."/>
            <person name="Ting L."/>
            <person name="Katrib M."/>
            <person name="Ng C."/>
            <person name="Sowers K.R."/>
            <person name="Galperin M.Y."/>
            <person name="Anderson I.J."/>
            <person name="Ivanova N."/>
            <person name="Dalin E."/>
            <person name="Martinez M."/>
            <person name="Lapidus A."/>
            <person name="Hauser L."/>
            <person name="Land M."/>
            <person name="Thomas T."/>
            <person name="Cavicchioli R."/>
        </authorList>
    </citation>
    <scope>NUCLEOTIDE SEQUENCE [LARGE SCALE GENOMIC DNA]</scope>
    <source>
        <strain>DSM 6242 / NBRC 107633 / OCM 468 / ACE-M</strain>
    </source>
</reference>
<name>ILVD_METBU</name>
<sequence length="553" mass="59289">MRSDNTKKGDARAPNRSLLKAIGVTDSEMKKPFIAVVNSWTEFIPGHIHLDKVAEAVKAGIRNAGGVPFEFHTIGVCDGIAMGHEGMKYSLPSREAIEDTIEIMIQGQQMDGMVMVTSCDKITPGHLMAAGRVDIPAIVVTGGPMLPGFVDDKYTDLVSVFEGVGSCQSGAVSSEKLKQLEDLCCCGAGSCAGMFTANTMACMTEALGLSLPGCATAHAVDAKKMRMAKESGERIVEMVSEGLTARKIVTDKSFENAIRVDLAVGGSTNTTLHLPAIAHEFGLELPLEKFNELSKTTPHLIGLRPGGENFMIDFERAGGVQAIMKRLVTKLNLDEKTITGKTVGENIDEFVIVNPKTNARVITTIEEPLHEEGGIAVLKGNLAPDGSVVKQSAVHEKMLRHTGPARVFDSEEEAMETILKGDIKSGDVVVIRYEGPKGGPGMREMLSPTSAIAGMGLIDSVALITDGRFSGGTRGPCIGHISPEAYEGGPIGLIQEGDIIEIDMPERRLELKVSEEDLEKRRVLFKPVEKEATGYLSRYRKIVSSASKGAIRE</sequence>
<protein>
    <recommendedName>
        <fullName evidence="1">Dihydroxy-acid dehydratase</fullName>
        <shortName evidence="1">DAD</shortName>
        <ecNumber evidence="1">4.2.1.9</ecNumber>
    </recommendedName>
</protein>
<gene>
    <name evidence="1" type="primary">ilvD</name>
    <name type="ordered locus">Mbur_2246</name>
</gene>
<accession>Q12TW7</accession>
<organism>
    <name type="scientific">Methanococcoides burtonii (strain DSM 6242 / NBRC 107633 / OCM 468 / ACE-M)</name>
    <dbReference type="NCBI Taxonomy" id="259564"/>
    <lineage>
        <taxon>Archaea</taxon>
        <taxon>Methanobacteriati</taxon>
        <taxon>Methanobacteriota</taxon>
        <taxon>Stenosarchaea group</taxon>
        <taxon>Methanomicrobia</taxon>
        <taxon>Methanosarcinales</taxon>
        <taxon>Methanosarcinaceae</taxon>
        <taxon>Methanococcoides</taxon>
    </lineage>
</organism>